<protein>
    <recommendedName>
        <fullName>Alpha-amylase-related protein</fullName>
        <ecNumber evidence="2">3.2.1.1</ecNumber>
    </recommendedName>
</protein>
<sequence>MFKFALTLTLCLAGSLSLAQHNPHWWGNRNTIVHLFEWKWSDIAQECESFLGPRGFAGVQVSPVNENIISAGRPWWERYQPISYKLTTRSGNEEEFGDMVRRCNDVGVRIYVDVLLNHMSGDFDGVAVGTAGTEAEPRKKSFPGVPYTAQDFHPTCEITDWNDRFQVQQCELVGLKDLDQSSDWVRSKLIEFLDHLIELGVAGFRVDAAKHMASEDLEYIYSSLSNLNIDHGFPHNSRPFIFQEVIDHGHETVSRDEYKDLGAVTEFRFSEEIGNAFRGNNALKWLQSWGTGWGFLPSGQALTFVDNHDNQRDAGAVLSYKSPRQYKMATAFHLAYPYGISRVMSSFAFDDHDTPPPQDAQERIISPEFDEDGACVNGWICEHRWRQIYAMVGFKNAVRDTEITGWWDNGDNQIAFCRGNKGFLAINNNLYDLSQDLNTCLPAGTYCDVISGSLIDGSCTGKSVTVNENGFGYIHIGSDDFDGVLALHVDAKV</sequence>
<keyword id="KW-0106">Calcium</keyword>
<keyword id="KW-0119">Carbohydrate metabolism</keyword>
<keyword id="KW-0868">Chloride</keyword>
<keyword id="KW-1015">Disulfide bond</keyword>
<keyword id="KW-0326">Glycosidase</keyword>
<keyword id="KW-0378">Hydrolase</keyword>
<keyword id="KW-0479">Metal-binding</keyword>
<keyword id="KW-0873">Pyrrolidone carboxylic acid</keyword>
<keyword id="KW-1185">Reference proteome</keyword>
<keyword id="KW-0964">Secreted</keyword>
<keyword id="KW-0732">Signal</keyword>
<organism>
    <name type="scientific">Drosophila sechellia</name>
    <name type="common">Fruit fly</name>
    <dbReference type="NCBI Taxonomy" id="7238"/>
    <lineage>
        <taxon>Eukaryota</taxon>
        <taxon>Metazoa</taxon>
        <taxon>Ecdysozoa</taxon>
        <taxon>Arthropoda</taxon>
        <taxon>Hexapoda</taxon>
        <taxon>Insecta</taxon>
        <taxon>Pterygota</taxon>
        <taxon>Neoptera</taxon>
        <taxon>Endopterygota</taxon>
        <taxon>Diptera</taxon>
        <taxon>Brachycera</taxon>
        <taxon>Muscomorpha</taxon>
        <taxon>Ephydroidea</taxon>
        <taxon>Drosophilidae</taxon>
        <taxon>Drosophila</taxon>
        <taxon>Sophophora</taxon>
    </lineage>
</organism>
<comment type="catalytic activity">
    <reaction evidence="2">
        <text>Endohydrolysis of (1-&gt;4)-alpha-D-glucosidic linkages in polysaccharides containing three or more (1-&gt;4)-alpha-linked D-glucose units.</text>
        <dbReference type="EC" id="3.2.1.1"/>
    </reaction>
</comment>
<comment type="cofactor">
    <cofactor evidence="3">
        <name>Ca(2+)</name>
        <dbReference type="ChEBI" id="CHEBI:29108"/>
    </cofactor>
    <text evidence="3">Binds 1 Ca(2+) ion per subunit.</text>
</comment>
<comment type="cofactor">
    <cofactor evidence="3">
        <name>chloride</name>
        <dbReference type="ChEBI" id="CHEBI:17996"/>
    </cofactor>
    <text evidence="3">Binds 1 Cl(-) ion per subunit.</text>
</comment>
<comment type="subunit">
    <text evidence="1">Monomer.</text>
</comment>
<comment type="subcellular location">
    <subcellularLocation>
        <location evidence="6">Secreted</location>
    </subcellularLocation>
</comment>
<comment type="similarity">
    <text evidence="6">Belongs to the glycosyl hydrolase 13 family.</text>
</comment>
<accession>O76261</accession>
<accession>B4HT73</accession>
<accession>B6C8H3</accession>
<accession>B6C8H4</accession>
<accession>B6C8H9</accession>
<accession>B6C8I0</accession>
<accession>B6C8I2</accession>
<accession>B6C8I4</accession>
<reference key="1">
    <citation type="submission" date="1997-12" db="EMBL/GenBank/DDBJ databases">
        <authorList>
            <person name="Da Lage J.-L."/>
        </authorList>
    </citation>
    <scope>NUCLEOTIDE SEQUENCE [GENOMIC DNA]</scope>
</reference>
<reference key="2">
    <citation type="submission" date="2007-07" db="EMBL/GenBank/DDBJ databases">
        <title>Multilocus patterns of nucleotide diversity in Drosophila sechellia: the evolutionary history of the least variable Drosophila species.</title>
        <authorList>
            <person name="Legrand D."/>
            <person name="Tenaillon M."/>
            <person name="Lachaise D."/>
            <person name="Cariou M.-L."/>
        </authorList>
    </citation>
    <scope>NUCLEOTIDE SEQUENCE [GENOMIC DNA]</scope>
    <scope>VARIANTS THR-143; SER-152; LEU-293 AND SER-423</scope>
    <source>
        <strain>Seychelles-1</strain>
        <strain>Seychelles-10</strain>
        <strain>Seychelles-11</strain>
        <strain>Seychelles-12</strain>
        <strain>Seychelles-13</strain>
        <strain>Seychelles-14</strain>
        <strain>Seychelles-15</strain>
        <strain>Seychelles-2</strain>
        <strain>Seychelles-3</strain>
        <strain>Seychelles-4</strain>
        <strain>Seychelles-5</strain>
        <strain>Seychelles-6</strain>
        <strain>Seychelles-7</strain>
        <strain>Seychelles-8</strain>
        <strain>Seychelles-9</strain>
    </source>
</reference>
<reference key="3">
    <citation type="journal article" date="2007" name="Nature">
        <title>Evolution of genes and genomes on the Drosophila phylogeny.</title>
        <authorList>
            <consortium name="Drosophila 12 genomes consortium"/>
        </authorList>
    </citation>
    <scope>NUCLEOTIDE SEQUENCE [LARGE SCALE GENOMIC DNA]</scope>
    <source>
        <strain>Rob3c / Tucson 14021-0248.25</strain>
    </source>
</reference>
<name>AMYR_DROSE</name>
<gene>
    <name type="primary">Amyrel</name>
    <name type="ORF">GM20043</name>
</gene>
<evidence type="ECO:0000250" key="1"/>
<evidence type="ECO:0000250" key="2">
    <source>
        <dbReference type="UniProtKB" id="P04746"/>
    </source>
</evidence>
<evidence type="ECO:0000250" key="3">
    <source>
        <dbReference type="UniProtKB" id="P56634"/>
    </source>
</evidence>
<evidence type="ECO:0000255" key="4"/>
<evidence type="ECO:0000269" key="5">
    <source ref="2"/>
</evidence>
<evidence type="ECO:0000305" key="6"/>
<feature type="signal peptide" evidence="1">
    <location>
        <begin position="1"/>
        <end position="19"/>
    </location>
</feature>
<feature type="chain" id="PRO_0000001386" description="Alpha-amylase-related protein">
    <location>
        <begin position="20"/>
        <end position="493"/>
    </location>
</feature>
<feature type="active site" description="Nucleophile" evidence="2">
    <location>
        <position position="207"/>
    </location>
</feature>
<feature type="active site" description="Proton donor" evidence="2">
    <location>
        <position position="244"/>
    </location>
</feature>
<feature type="binding site" evidence="3">
    <location>
        <position position="117"/>
    </location>
    <ligand>
        <name>Ca(2+)</name>
        <dbReference type="ChEBI" id="CHEBI:29108"/>
    </ligand>
</feature>
<feature type="binding site" evidence="3">
    <location>
        <position position="168"/>
    </location>
    <ligand>
        <name>Ca(2+)</name>
        <dbReference type="ChEBI" id="CHEBI:29108"/>
    </ligand>
</feature>
<feature type="binding site" evidence="3">
    <location>
        <position position="177"/>
    </location>
    <ligand>
        <name>Ca(2+)</name>
        <dbReference type="ChEBI" id="CHEBI:29108"/>
    </ligand>
</feature>
<feature type="binding site" evidence="3">
    <location>
        <position position="205"/>
    </location>
    <ligand>
        <name>chloride</name>
        <dbReference type="ChEBI" id="CHEBI:17996"/>
    </ligand>
</feature>
<feature type="binding site" evidence="3">
    <location>
        <position position="211"/>
    </location>
    <ligand>
        <name>Ca(2+)</name>
        <dbReference type="ChEBI" id="CHEBI:29108"/>
    </ligand>
</feature>
<feature type="binding site" evidence="3">
    <location>
        <position position="307"/>
    </location>
    <ligand>
        <name>chloride</name>
        <dbReference type="ChEBI" id="CHEBI:17996"/>
    </ligand>
</feature>
<feature type="binding site" evidence="3">
    <location>
        <position position="342"/>
    </location>
    <ligand>
        <name>chloride</name>
        <dbReference type="ChEBI" id="CHEBI:17996"/>
    </ligand>
</feature>
<feature type="site" description="Transition state stabilizer" evidence="2">
    <location>
        <position position="309"/>
    </location>
</feature>
<feature type="modified residue" description="Pyrrolidone carboxylic acid" evidence="1">
    <location>
        <position position="20"/>
    </location>
</feature>
<feature type="disulfide bond" evidence="3">
    <location>
        <begin position="47"/>
        <end position="103"/>
    </location>
</feature>
<feature type="disulfide bond" evidence="3">
    <location>
        <begin position="156"/>
        <end position="170"/>
    </location>
</feature>
<feature type="disulfide bond" evidence="3">
    <location>
        <begin position="375"/>
        <end position="381"/>
    </location>
</feature>
<feature type="disulfide bond" evidence="4">
    <location>
        <begin position="417"/>
        <end position="440"/>
    </location>
</feature>
<feature type="disulfide bond" evidence="3">
    <location>
        <begin position="447"/>
        <end position="459"/>
    </location>
</feature>
<feature type="sequence variant" description="In strain: Seychelles-1 and Seychelles-15." evidence="5">
    <original>P</original>
    <variation>T</variation>
    <location>
        <position position="143"/>
    </location>
</feature>
<feature type="sequence variant" description="In strain: Seychelles-12." evidence="5">
    <original>F</original>
    <variation>S</variation>
    <location>
        <position position="152"/>
    </location>
</feature>
<feature type="sequence variant" description="In strain: Seychelles-7 and Seychelles-8." evidence="5">
    <original>W</original>
    <variation>L</variation>
    <location>
        <position position="293"/>
    </location>
</feature>
<feature type="sequence variant" description="In strain: Seychelles-8 and Seychelles-10." evidence="5">
    <original>F</original>
    <variation>S</variation>
    <location>
        <position position="423"/>
    </location>
</feature>
<proteinExistence type="inferred from homology"/>
<dbReference type="EC" id="3.2.1.1" evidence="2"/>
<dbReference type="EMBL" id="AF039558">
    <property type="protein sequence ID" value="AAC39093.1"/>
    <property type="molecule type" value="Genomic_DNA"/>
</dbReference>
<dbReference type="EMBL" id="EU018418">
    <property type="protein sequence ID" value="ABW69388.1"/>
    <property type="molecule type" value="Genomic_DNA"/>
</dbReference>
<dbReference type="EMBL" id="EU018419">
    <property type="protein sequence ID" value="ABW69389.1"/>
    <property type="molecule type" value="Genomic_DNA"/>
</dbReference>
<dbReference type="EMBL" id="EU018420">
    <property type="protein sequence ID" value="ABW69390.1"/>
    <property type="molecule type" value="Genomic_DNA"/>
</dbReference>
<dbReference type="EMBL" id="EU018421">
    <property type="protein sequence ID" value="ABW69391.1"/>
    <property type="molecule type" value="Genomic_DNA"/>
</dbReference>
<dbReference type="EMBL" id="EU018422">
    <property type="protein sequence ID" value="ABW69392.1"/>
    <property type="molecule type" value="Genomic_DNA"/>
</dbReference>
<dbReference type="EMBL" id="EU018423">
    <property type="protein sequence ID" value="ABW69393.1"/>
    <property type="molecule type" value="Genomic_DNA"/>
</dbReference>
<dbReference type="EMBL" id="EU018424">
    <property type="protein sequence ID" value="ABW69394.1"/>
    <property type="molecule type" value="Genomic_DNA"/>
</dbReference>
<dbReference type="EMBL" id="EU018425">
    <property type="protein sequence ID" value="ABW69395.1"/>
    <property type="molecule type" value="Genomic_DNA"/>
</dbReference>
<dbReference type="EMBL" id="EU018426">
    <property type="protein sequence ID" value="ABW69396.1"/>
    <property type="molecule type" value="Genomic_DNA"/>
</dbReference>
<dbReference type="EMBL" id="EU018427">
    <property type="protein sequence ID" value="ABW69397.1"/>
    <property type="molecule type" value="Genomic_DNA"/>
</dbReference>
<dbReference type="EMBL" id="EU018428">
    <property type="protein sequence ID" value="ABW69398.1"/>
    <property type="molecule type" value="Genomic_DNA"/>
</dbReference>
<dbReference type="EMBL" id="EU018429">
    <property type="protein sequence ID" value="ABW69399.1"/>
    <property type="molecule type" value="Genomic_DNA"/>
</dbReference>
<dbReference type="EMBL" id="EU018430">
    <property type="protein sequence ID" value="ABW69400.1"/>
    <property type="molecule type" value="Genomic_DNA"/>
</dbReference>
<dbReference type="EMBL" id="EU018431">
    <property type="protein sequence ID" value="ABW69401.1"/>
    <property type="molecule type" value="Genomic_DNA"/>
</dbReference>
<dbReference type="EMBL" id="EU018432">
    <property type="protein sequence ID" value="ABW69402.1"/>
    <property type="molecule type" value="Genomic_DNA"/>
</dbReference>
<dbReference type="EMBL" id="CH480816">
    <property type="protein sequence ID" value="EDW48174.1"/>
    <property type="molecule type" value="Genomic_DNA"/>
</dbReference>
<dbReference type="SMR" id="O76261"/>
<dbReference type="STRING" id="7238.O76261"/>
<dbReference type="CAZy" id="GH13">
    <property type="family name" value="Glycoside Hydrolase Family 13"/>
</dbReference>
<dbReference type="EnsemblMetazoa" id="FBtr0203028">
    <property type="protein sequence ID" value="FBpp0201520"/>
    <property type="gene ID" value="FBgn0025060"/>
</dbReference>
<dbReference type="EnsemblMetazoa" id="XM_002034125.2">
    <property type="protein sequence ID" value="XP_002034161.1"/>
    <property type="gene ID" value="LOC6609476"/>
</dbReference>
<dbReference type="GeneID" id="6609476"/>
<dbReference type="KEGG" id="dse:6609476"/>
<dbReference type="HOGENOM" id="CLU_013336_2_1_1"/>
<dbReference type="OMA" id="WGNRNTI"/>
<dbReference type="OrthoDB" id="5523at7215"/>
<dbReference type="PhylomeDB" id="O76261"/>
<dbReference type="Proteomes" id="UP000001292">
    <property type="component" value="Unassembled WGS sequence"/>
</dbReference>
<dbReference type="GO" id="GO:0005576">
    <property type="term" value="C:extracellular region"/>
    <property type="evidence" value="ECO:0007669"/>
    <property type="project" value="UniProtKB-SubCell"/>
</dbReference>
<dbReference type="GO" id="GO:0004134">
    <property type="term" value="F:4-alpha-glucanotransferase activity"/>
    <property type="evidence" value="ECO:0007669"/>
    <property type="project" value="EnsemblMetazoa"/>
</dbReference>
<dbReference type="GO" id="GO:0004556">
    <property type="term" value="F:alpha-amylase activity"/>
    <property type="evidence" value="ECO:0007669"/>
    <property type="project" value="UniProtKB-EC"/>
</dbReference>
<dbReference type="GO" id="GO:0046872">
    <property type="term" value="F:metal ion binding"/>
    <property type="evidence" value="ECO:0007669"/>
    <property type="project" value="UniProtKB-KW"/>
</dbReference>
<dbReference type="GO" id="GO:0005975">
    <property type="term" value="P:carbohydrate metabolic process"/>
    <property type="evidence" value="ECO:0007669"/>
    <property type="project" value="InterPro"/>
</dbReference>
<dbReference type="CDD" id="cd11317">
    <property type="entry name" value="AmyAc_bac_euk_AmyA"/>
    <property type="match status" value="1"/>
</dbReference>
<dbReference type="FunFam" id="3.20.20.80:FF:000119">
    <property type="entry name" value="Alpha-amylase-related protein"/>
    <property type="match status" value="1"/>
</dbReference>
<dbReference type="FunFam" id="2.60.40.1180:FF:000020">
    <property type="entry name" value="Pancreatic alpha-amylase"/>
    <property type="match status" value="1"/>
</dbReference>
<dbReference type="Gene3D" id="3.20.20.80">
    <property type="entry name" value="Glycosidases"/>
    <property type="match status" value="1"/>
</dbReference>
<dbReference type="Gene3D" id="2.60.40.1180">
    <property type="entry name" value="Golgi alpha-mannosidase II"/>
    <property type="match status" value="1"/>
</dbReference>
<dbReference type="InterPro" id="IPR006048">
    <property type="entry name" value="A-amylase/branching_C"/>
</dbReference>
<dbReference type="InterPro" id="IPR031319">
    <property type="entry name" value="A-amylase_C"/>
</dbReference>
<dbReference type="InterPro" id="IPR006046">
    <property type="entry name" value="Alpha_amylase"/>
</dbReference>
<dbReference type="InterPro" id="IPR006047">
    <property type="entry name" value="Glyco_hydro_13_cat_dom"/>
</dbReference>
<dbReference type="InterPro" id="IPR013780">
    <property type="entry name" value="Glyco_hydro_b"/>
</dbReference>
<dbReference type="InterPro" id="IPR017853">
    <property type="entry name" value="Glycoside_hydrolase_SF"/>
</dbReference>
<dbReference type="PANTHER" id="PTHR43447">
    <property type="entry name" value="ALPHA-AMYLASE"/>
    <property type="match status" value="1"/>
</dbReference>
<dbReference type="Pfam" id="PF00128">
    <property type="entry name" value="Alpha-amylase"/>
    <property type="match status" value="1"/>
</dbReference>
<dbReference type="Pfam" id="PF02806">
    <property type="entry name" value="Alpha-amylase_C"/>
    <property type="match status" value="1"/>
</dbReference>
<dbReference type="PRINTS" id="PR00110">
    <property type="entry name" value="ALPHAAMYLASE"/>
</dbReference>
<dbReference type="SMART" id="SM00642">
    <property type="entry name" value="Aamy"/>
    <property type="match status" value="1"/>
</dbReference>
<dbReference type="SMART" id="SM00632">
    <property type="entry name" value="Aamy_C"/>
    <property type="match status" value="1"/>
</dbReference>
<dbReference type="SUPFAM" id="SSF51445">
    <property type="entry name" value="(Trans)glycosidases"/>
    <property type="match status" value="1"/>
</dbReference>
<dbReference type="SUPFAM" id="SSF51011">
    <property type="entry name" value="Glycosyl hydrolase domain"/>
    <property type="match status" value="1"/>
</dbReference>